<gene>
    <name type="primary">DPH2</name>
    <name type="ordered locus">DEHA2F05830g</name>
</gene>
<evidence type="ECO:0000250" key="1">
    <source>
        <dbReference type="UniProtKB" id="P32461"/>
    </source>
</evidence>
<evidence type="ECO:0000256" key="2">
    <source>
        <dbReference type="SAM" id="MobiDB-lite"/>
    </source>
</evidence>
<evidence type="ECO:0000305" key="3"/>
<feature type="chain" id="PRO_0000083387" description="2-(3-amino-3-carboxypropyl)histidine synthase subunit 2">
    <location>
        <begin position="1"/>
        <end position="588"/>
    </location>
</feature>
<feature type="region of interest" description="Disordered" evidence="2">
    <location>
        <begin position="454"/>
        <end position="485"/>
    </location>
</feature>
<feature type="region of interest" description="Disordered" evidence="2">
    <location>
        <begin position="546"/>
        <end position="588"/>
    </location>
</feature>
<feature type="compositionally biased region" description="Acidic residues" evidence="2">
    <location>
        <begin position="466"/>
        <end position="477"/>
    </location>
</feature>
<feature type="compositionally biased region" description="Basic and acidic residues" evidence="2">
    <location>
        <begin position="579"/>
        <end position="588"/>
    </location>
</feature>
<feature type="binding site" evidence="1">
    <location>
        <position position="149"/>
    </location>
    <ligand>
        <name>[4Fe-4S] cluster</name>
        <dbReference type="ChEBI" id="CHEBI:49883"/>
    </ligand>
</feature>
<feature type="binding site" evidence="1">
    <location>
        <position position="170"/>
    </location>
    <ligand>
        <name>[4Fe-4S] cluster</name>
        <dbReference type="ChEBI" id="CHEBI:49883"/>
    </ligand>
</feature>
<feature type="binding site" evidence="1">
    <location>
        <position position="402"/>
    </location>
    <ligand>
        <name>[4Fe-4S] cluster</name>
        <dbReference type="ChEBI" id="CHEBI:49883"/>
    </ligand>
</feature>
<comment type="function">
    <text evidence="1">Required for the first step of diphthamide biosynthesis, a post-translational modification of histidine which occurs in elongation factor 2. DPH1 and DPH2 transfer a 3-amino-3-carboxypropyl (ACP) group from S-adenosyl-L-methionine (SAM) to a histidine residue, the reaction is assisted by a reduction system comprising DPH3 and a NADH-dependent reductase, predominantly CBR1 (By similarity). Facilitates the reduction of the catalytic iron-sulfur cluster found in the DPH1 subunit (By similarity).</text>
</comment>
<comment type="cofactor">
    <cofactor evidence="1">
        <name>[4Fe-4S] cluster</name>
        <dbReference type="ChEBI" id="CHEBI:49883"/>
    </cofactor>
    <text evidence="1">Binds 1 [4Fe-4S] cluster per subunit. The cluster facilitates the reduction of the catalytic iron-sulfur cluster in the DPH1 subunit.</text>
</comment>
<comment type="pathway">
    <text evidence="1">Protein modification; peptidyl-diphthamide biosynthesis.</text>
</comment>
<comment type="subunit">
    <text evidence="1">Component of the 2-(3-amino-3-carboxypropyl)histidine synthase complex composed of DPH1, DPH2, DPH3 and a NADH-dependent reductase, predominantly CBR1.</text>
</comment>
<comment type="subcellular location">
    <subcellularLocation>
        <location evidence="1">Cytoplasm</location>
    </subcellularLocation>
</comment>
<comment type="similarity">
    <text evidence="3">Belongs to the DPH1/DPH2 family. DPH2 subfamily.</text>
</comment>
<protein>
    <recommendedName>
        <fullName evidence="3">2-(3-amino-3-carboxypropyl)histidine synthase subunit 2</fullName>
    </recommendedName>
    <alternativeName>
        <fullName>Diphthamide biosynthesis protein 2</fullName>
    </alternativeName>
    <alternativeName>
        <fullName evidence="3">Diphtheria toxin resistance protein 2</fullName>
    </alternativeName>
    <alternativeName>
        <fullName evidence="3">S-adenosyl-L-methionine:L-histidine 3-amino-3-carboxypropyltransferase 2</fullName>
    </alternativeName>
</protein>
<proteinExistence type="inferred from homology"/>
<keyword id="KW-0963">Cytoplasm</keyword>
<keyword id="KW-0408">Iron</keyword>
<keyword id="KW-0411">Iron-sulfur</keyword>
<keyword id="KW-0479">Metal-binding</keyword>
<keyword id="KW-1185">Reference proteome</keyword>
<organism>
    <name type="scientific">Debaryomyces hansenii (strain ATCC 36239 / CBS 767 / BCRC 21394 / JCM 1990 / NBRC 0083 / IGC 2968)</name>
    <name type="common">Yeast</name>
    <name type="synonym">Torulaspora hansenii</name>
    <dbReference type="NCBI Taxonomy" id="284592"/>
    <lineage>
        <taxon>Eukaryota</taxon>
        <taxon>Fungi</taxon>
        <taxon>Dikarya</taxon>
        <taxon>Ascomycota</taxon>
        <taxon>Saccharomycotina</taxon>
        <taxon>Pichiomycetes</taxon>
        <taxon>Debaryomycetaceae</taxon>
        <taxon>Debaryomyces</taxon>
    </lineage>
</organism>
<dbReference type="EMBL" id="CR382138">
    <property type="protein sequence ID" value="CAG88940.2"/>
    <property type="molecule type" value="Genomic_DNA"/>
</dbReference>
<dbReference type="RefSeq" id="XP_460615.2">
    <property type="nucleotide sequence ID" value="XM_460615.1"/>
</dbReference>
<dbReference type="SMR" id="Q6BMF6"/>
<dbReference type="FunCoup" id="Q6BMF6">
    <property type="interactions" value="1000"/>
</dbReference>
<dbReference type="STRING" id="284592.Q6BMF6"/>
<dbReference type="GeneID" id="2903388"/>
<dbReference type="KEGG" id="dha:DEHA2F05830g"/>
<dbReference type="VEuPathDB" id="FungiDB:DEHA2F05830g"/>
<dbReference type="eggNOG" id="KOG2648">
    <property type="taxonomic scope" value="Eukaryota"/>
</dbReference>
<dbReference type="HOGENOM" id="CLU_015210_1_0_1"/>
<dbReference type="InParanoid" id="Q6BMF6"/>
<dbReference type="OMA" id="QIWNENH"/>
<dbReference type="OrthoDB" id="449241at2759"/>
<dbReference type="UniPathway" id="UPA00559"/>
<dbReference type="Proteomes" id="UP000000599">
    <property type="component" value="Chromosome F"/>
</dbReference>
<dbReference type="GO" id="GO:0120513">
    <property type="term" value="C:2-(3-amino-3-carboxypropyl)histidine synthase complex"/>
    <property type="evidence" value="ECO:0000250"/>
    <property type="project" value="UniProtKB"/>
</dbReference>
<dbReference type="GO" id="GO:0005737">
    <property type="term" value="C:cytoplasm"/>
    <property type="evidence" value="ECO:0007669"/>
    <property type="project" value="UniProtKB-SubCell"/>
</dbReference>
<dbReference type="GO" id="GO:0090560">
    <property type="term" value="F:2-(3-amino-3-carboxypropyl)histidine synthase activity"/>
    <property type="evidence" value="ECO:0007669"/>
    <property type="project" value="UniProtKB-EC"/>
</dbReference>
<dbReference type="GO" id="GO:0051539">
    <property type="term" value="F:4 iron, 4 sulfur cluster binding"/>
    <property type="evidence" value="ECO:0000250"/>
    <property type="project" value="UniProtKB"/>
</dbReference>
<dbReference type="GO" id="GO:0046872">
    <property type="term" value="F:metal ion binding"/>
    <property type="evidence" value="ECO:0007669"/>
    <property type="project" value="UniProtKB-KW"/>
</dbReference>
<dbReference type="GO" id="GO:0017183">
    <property type="term" value="P:protein histidyl modification to diphthamide"/>
    <property type="evidence" value="ECO:0000250"/>
    <property type="project" value="UniProtKB"/>
</dbReference>
<dbReference type="FunFam" id="3.40.50.11860:FF:000001">
    <property type="entry name" value="2-(3-amino-3-carboxypropyl)histidine synthase subunit 2"/>
    <property type="match status" value="1"/>
</dbReference>
<dbReference type="Gene3D" id="3.40.50.11840">
    <property type="entry name" value="Diphthamide synthesis DPH1/DPH2 domain 1"/>
    <property type="match status" value="1"/>
</dbReference>
<dbReference type="Gene3D" id="3.40.50.11860">
    <property type="entry name" value="Diphthamide synthesis DPH1/DPH2 domain 3"/>
    <property type="match status" value="1"/>
</dbReference>
<dbReference type="InterPro" id="IPR010014">
    <property type="entry name" value="DHP2"/>
</dbReference>
<dbReference type="InterPro" id="IPR016435">
    <property type="entry name" value="DPH1/DPH2"/>
</dbReference>
<dbReference type="InterPro" id="IPR042263">
    <property type="entry name" value="DPH1/DPH2_1"/>
</dbReference>
<dbReference type="InterPro" id="IPR042265">
    <property type="entry name" value="DPH1/DPH2_3"/>
</dbReference>
<dbReference type="NCBIfam" id="TIGR00322">
    <property type="entry name" value="diphth2_R"/>
    <property type="match status" value="1"/>
</dbReference>
<dbReference type="NCBIfam" id="TIGR00272">
    <property type="entry name" value="DPH2"/>
    <property type="match status" value="1"/>
</dbReference>
<dbReference type="PANTHER" id="PTHR10762:SF2">
    <property type="entry name" value="2-(3-AMINO-3-CARBOXYPROPYL)HISTIDINE SYNTHASE SUBUNIT 2"/>
    <property type="match status" value="1"/>
</dbReference>
<dbReference type="PANTHER" id="PTHR10762">
    <property type="entry name" value="DIPHTHAMIDE BIOSYNTHESIS PROTEIN"/>
    <property type="match status" value="1"/>
</dbReference>
<dbReference type="Pfam" id="PF01866">
    <property type="entry name" value="Diphthamide_syn"/>
    <property type="match status" value="1"/>
</dbReference>
<dbReference type="SFLD" id="SFLDG01121">
    <property type="entry name" value="Diphthamide_biosynthesis"/>
    <property type="match status" value="1"/>
</dbReference>
<dbReference type="SFLD" id="SFLDF00408">
    <property type="entry name" value="Diphthamide_biosynthesis_famil"/>
    <property type="match status" value="1"/>
</dbReference>
<dbReference type="SFLD" id="SFLDS00032">
    <property type="entry name" value="Radical_SAM_3-amino-3-carboxyp"/>
    <property type="match status" value="1"/>
</dbReference>
<accession>Q6BMF6</accession>
<reference key="1">
    <citation type="journal article" date="2004" name="Nature">
        <title>Genome evolution in yeasts.</title>
        <authorList>
            <person name="Dujon B."/>
            <person name="Sherman D."/>
            <person name="Fischer G."/>
            <person name="Durrens P."/>
            <person name="Casaregola S."/>
            <person name="Lafontaine I."/>
            <person name="de Montigny J."/>
            <person name="Marck C."/>
            <person name="Neuveglise C."/>
            <person name="Talla E."/>
            <person name="Goffard N."/>
            <person name="Frangeul L."/>
            <person name="Aigle M."/>
            <person name="Anthouard V."/>
            <person name="Babour A."/>
            <person name="Barbe V."/>
            <person name="Barnay S."/>
            <person name="Blanchin S."/>
            <person name="Beckerich J.-M."/>
            <person name="Beyne E."/>
            <person name="Bleykasten C."/>
            <person name="Boisrame A."/>
            <person name="Boyer J."/>
            <person name="Cattolico L."/>
            <person name="Confanioleri F."/>
            <person name="de Daruvar A."/>
            <person name="Despons L."/>
            <person name="Fabre E."/>
            <person name="Fairhead C."/>
            <person name="Ferry-Dumazet H."/>
            <person name="Groppi A."/>
            <person name="Hantraye F."/>
            <person name="Hennequin C."/>
            <person name="Jauniaux N."/>
            <person name="Joyet P."/>
            <person name="Kachouri R."/>
            <person name="Kerrest A."/>
            <person name="Koszul R."/>
            <person name="Lemaire M."/>
            <person name="Lesur I."/>
            <person name="Ma L."/>
            <person name="Muller H."/>
            <person name="Nicaud J.-M."/>
            <person name="Nikolski M."/>
            <person name="Oztas S."/>
            <person name="Ozier-Kalogeropoulos O."/>
            <person name="Pellenz S."/>
            <person name="Potier S."/>
            <person name="Richard G.-F."/>
            <person name="Straub M.-L."/>
            <person name="Suleau A."/>
            <person name="Swennen D."/>
            <person name="Tekaia F."/>
            <person name="Wesolowski-Louvel M."/>
            <person name="Westhof E."/>
            <person name="Wirth B."/>
            <person name="Zeniou-Meyer M."/>
            <person name="Zivanovic Y."/>
            <person name="Bolotin-Fukuhara M."/>
            <person name="Thierry A."/>
            <person name="Bouchier C."/>
            <person name="Caudron B."/>
            <person name="Scarpelli C."/>
            <person name="Gaillardin C."/>
            <person name="Weissenbach J."/>
            <person name="Wincker P."/>
            <person name="Souciet J.-L."/>
        </authorList>
    </citation>
    <scope>NUCLEOTIDE SEQUENCE [LARGE SCALE GENOMIC DNA]</scope>
    <source>
        <strain>ATCC 36239 / CBS 767 / BCRC 21394 / JCM 1990 / NBRC 0083 / IGC 2968</strain>
    </source>
</reference>
<name>DPH2_DEBHA</name>
<sequence length="588" mass="65838">MTTEGLVVPALSTQQDDSTFEFDKVCSKTVVRSHLGLPNDATDDQVIKRIREYYNISEICNFLKQKVEGHELDMIPKYKHVTLQFPDSLICDSASIVHELQRELGLMPRTEDSSEVKCSADSCCKTGKVESPLSQKLWILADTSYSSCCIDEVAAGHVNSDLVIHFGDACLNVVESLPAAYVFGKPSLKLDSVITQFKEIYANRDSKILIMADAPHTQSLNQLYNILKPEYPNLAYADLYLNPSSNASIIGYDPCPSQSSILNVLNRTIIGLDNGDIDTDIDTILLEHDLFHIEVPAVPRLLQLTTRFQSVTTFEPKSGLASQGPYPKLMRRYRYMHMARSAGTVGLLVNTLSLANTKTLINKIGQKIKEAGKKHYVFVVGKPNVAKLANFENIDIWCVLGCDHQGIIIDENNEYYKPIVTPYELLLALNKDQNWSGKWVTDFNKVLEDMSLEDERNKQEINDGSDNNEEDSDDEAPEFNPVTGQYVSTSKPLRKLHHLQISSQEQHPELDNEGSQDLVKKFSSAVAIKDTVSTSAMHLQTRHWTGLGSDFQQNDSDEEANNEDGALVEDGRAGIARGYDYDRETKFQ</sequence>